<protein>
    <recommendedName>
        <fullName evidence="1">4-hydroxy-tetrahydrodipicolinate reductase</fullName>
        <shortName evidence="1">HTPA reductase</shortName>
        <ecNumber evidence="1">1.17.1.8</ecNumber>
    </recommendedName>
</protein>
<sequence>MSLGIGIIGAGGRMGRMLIEVVHRQPGVHVAAATDRTGGEAVGRDAGELAGQGSLGVPIGDDIPAAVAASDAVIDFSLPEATETVAAACAEAGRPLVLGTTGLGETQREAVHRLAEQVAVMHAANYSTGVTLLTALVEQAARAIGVYSDIEIIEAHHRHKVDAPSGTALRLGEAVADALGRDLSQCAVYGREGHTGERDPQTIGFETIRAGDIVGDHTVLFGGDGERVELTHKASSRTTFASGAVRAAAWVVEQPPGLYDMRDMIGV</sequence>
<organism>
    <name type="scientific">Halorhodospira halophila (strain DSM 244 / SL1)</name>
    <name type="common">Ectothiorhodospira halophila (strain DSM 244 / SL1)</name>
    <dbReference type="NCBI Taxonomy" id="349124"/>
    <lineage>
        <taxon>Bacteria</taxon>
        <taxon>Pseudomonadati</taxon>
        <taxon>Pseudomonadota</taxon>
        <taxon>Gammaproteobacteria</taxon>
        <taxon>Chromatiales</taxon>
        <taxon>Ectothiorhodospiraceae</taxon>
        <taxon>Halorhodospira</taxon>
    </lineage>
</organism>
<accession>A1WX29</accession>
<gene>
    <name evidence="1" type="primary">dapB</name>
    <name type="ordered locus">Hhal_1474</name>
</gene>
<reference key="1">
    <citation type="submission" date="2006-12" db="EMBL/GenBank/DDBJ databases">
        <title>Complete sequence of Halorhodospira halophila SL1.</title>
        <authorList>
            <consortium name="US DOE Joint Genome Institute"/>
            <person name="Copeland A."/>
            <person name="Lucas S."/>
            <person name="Lapidus A."/>
            <person name="Barry K."/>
            <person name="Detter J.C."/>
            <person name="Glavina del Rio T."/>
            <person name="Hammon N."/>
            <person name="Israni S."/>
            <person name="Dalin E."/>
            <person name="Tice H."/>
            <person name="Pitluck S."/>
            <person name="Saunders E."/>
            <person name="Brettin T."/>
            <person name="Bruce D."/>
            <person name="Han C."/>
            <person name="Tapia R."/>
            <person name="Schmutz J."/>
            <person name="Larimer F."/>
            <person name="Land M."/>
            <person name="Hauser L."/>
            <person name="Kyrpides N."/>
            <person name="Mikhailova N."/>
            <person name="Hoff W."/>
            <person name="Richardson P."/>
        </authorList>
    </citation>
    <scope>NUCLEOTIDE SEQUENCE [LARGE SCALE GENOMIC DNA]</scope>
    <source>
        <strain>DSM 244 / SL1</strain>
    </source>
</reference>
<name>DAPB_HALHL</name>
<feature type="chain" id="PRO_1000008571" description="4-hydroxy-tetrahydrodipicolinate reductase">
    <location>
        <begin position="1"/>
        <end position="267"/>
    </location>
</feature>
<feature type="active site" description="Proton donor/acceptor" evidence="1">
    <location>
        <position position="156"/>
    </location>
</feature>
<feature type="active site" description="Proton donor" evidence="1">
    <location>
        <position position="160"/>
    </location>
</feature>
<feature type="binding site" evidence="1">
    <location>
        <begin position="9"/>
        <end position="14"/>
    </location>
    <ligand>
        <name>NAD(+)</name>
        <dbReference type="ChEBI" id="CHEBI:57540"/>
    </ligand>
</feature>
<feature type="binding site" evidence="1">
    <location>
        <position position="35"/>
    </location>
    <ligand>
        <name>NAD(+)</name>
        <dbReference type="ChEBI" id="CHEBI:57540"/>
    </ligand>
</feature>
<feature type="binding site" evidence="1">
    <location>
        <position position="36"/>
    </location>
    <ligand>
        <name>NADP(+)</name>
        <dbReference type="ChEBI" id="CHEBI:58349"/>
    </ligand>
</feature>
<feature type="binding site" evidence="1">
    <location>
        <begin position="99"/>
        <end position="101"/>
    </location>
    <ligand>
        <name>NAD(+)</name>
        <dbReference type="ChEBI" id="CHEBI:57540"/>
    </ligand>
</feature>
<feature type="binding site" evidence="1">
    <location>
        <begin position="123"/>
        <end position="126"/>
    </location>
    <ligand>
        <name>NAD(+)</name>
        <dbReference type="ChEBI" id="CHEBI:57540"/>
    </ligand>
</feature>
<feature type="binding site" evidence="1">
    <location>
        <position position="157"/>
    </location>
    <ligand>
        <name>(S)-2,3,4,5-tetrahydrodipicolinate</name>
        <dbReference type="ChEBI" id="CHEBI:16845"/>
    </ligand>
</feature>
<feature type="binding site" evidence="1">
    <location>
        <begin position="166"/>
        <end position="167"/>
    </location>
    <ligand>
        <name>(S)-2,3,4,5-tetrahydrodipicolinate</name>
        <dbReference type="ChEBI" id="CHEBI:16845"/>
    </ligand>
</feature>
<comment type="function">
    <text evidence="1">Catalyzes the conversion of 4-hydroxy-tetrahydrodipicolinate (HTPA) to tetrahydrodipicolinate.</text>
</comment>
<comment type="catalytic activity">
    <reaction evidence="1">
        <text>(S)-2,3,4,5-tetrahydrodipicolinate + NAD(+) + H2O = (2S,4S)-4-hydroxy-2,3,4,5-tetrahydrodipicolinate + NADH + H(+)</text>
        <dbReference type="Rhea" id="RHEA:35323"/>
        <dbReference type="ChEBI" id="CHEBI:15377"/>
        <dbReference type="ChEBI" id="CHEBI:15378"/>
        <dbReference type="ChEBI" id="CHEBI:16845"/>
        <dbReference type="ChEBI" id="CHEBI:57540"/>
        <dbReference type="ChEBI" id="CHEBI:57945"/>
        <dbReference type="ChEBI" id="CHEBI:67139"/>
        <dbReference type="EC" id="1.17.1.8"/>
    </reaction>
</comment>
<comment type="catalytic activity">
    <reaction evidence="1">
        <text>(S)-2,3,4,5-tetrahydrodipicolinate + NADP(+) + H2O = (2S,4S)-4-hydroxy-2,3,4,5-tetrahydrodipicolinate + NADPH + H(+)</text>
        <dbReference type="Rhea" id="RHEA:35331"/>
        <dbReference type="ChEBI" id="CHEBI:15377"/>
        <dbReference type="ChEBI" id="CHEBI:15378"/>
        <dbReference type="ChEBI" id="CHEBI:16845"/>
        <dbReference type="ChEBI" id="CHEBI:57783"/>
        <dbReference type="ChEBI" id="CHEBI:58349"/>
        <dbReference type="ChEBI" id="CHEBI:67139"/>
        <dbReference type="EC" id="1.17.1.8"/>
    </reaction>
</comment>
<comment type="pathway">
    <text evidence="1">Amino-acid biosynthesis; L-lysine biosynthesis via DAP pathway; (S)-tetrahydrodipicolinate from L-aspartate: step 4/4.</text>
</comment>
<comment type="subcellular location">
    <subcellularLocation>
        <location evidence="1">Cytoplasm</location>
    </subcellularLocation>
</comment>
<comment type="similarity">
    <text evidence="1">Belongs to the DapB family.</text>
</comment>
<comment type="caution">
    <text evidence="2">Was originally thought to be a dihydrodipicolinate reductase (DHDPR), catalyzing the conversion of dihydrodipicolinate to tetrahydrodipicolinate. However, it was shown in E.coli that the substrate of the enzymatic reaction is not dihydrodipicolinate (DHDP) but in fact (2S,4S)-4-hydroxy-2,3,4,5-tetrahydrodipicolinic acid (HTPA), the product released by the DapA-catalyzed reaction.</text>
</comment>
<evidence type="ECO:0000255" key="1">
    <source>
        <dbReference type="HAMAP-Rule" id="MF_00102"/>
    </source>
</evidence>
<evidence type="ECO:0000305" key="2"/>
<dbReference type="EC" id="1.17.1.8" evidence="1"/>
<dbReference type="EMBL" id="CP000544">
    <property type="protein sequence ID" value="ABM62241.1"/>
    <property type="molecule type" value="Genomic_DNA"/>
</dbReference>
<dbReference type="RefSeq" id="WP_011814263.1">
    <property type="nucleotide sequence ID" value="NC_008789.1"/>
</dbReference>
<dbReference type="SMR" id="A1WX29"/>
<dbReference type="STRING" id="349124.Hhal_1474"/>
<dbReference type="KEGG" id="hha:Hhal_1474"/>
<dbReference type="eggNOG" id="COG0289">
    <property type="taxonomic scope" value="Bacteria"/>
</dbReference>
<dbReference type="HOGENOM" id="CLU_047479_2_1_6"/>
<dbReference type="OrthoDB" id="9790352at2"/>
<dbReference type="UniPathway" id="UPA00034">
    <property type="reaction ID" value="UER00018"/>
</dbReference>
<dbReference type="Proteomes" id="UP000000647">
    <property type="component" value="Chromosome"/>
</dbReference>
<dbReference type="GO" id="GO:0005829">
    <property type="term" value="C:cytosol"/>
    <property type="evidence" value="ECO:0007669"/>
    <property type="project" value="TreeGrafter"/>
</dbReference>
<dbReference type="GO" id="GO:0008839">
    <property type="term" value="F:4-hydroxy-tetrahydrodipicolinate reductase"/>
    <property type="evidence" value="ECO:0007669"/>
    <property type="project" value="UniProtKB-EC"/>
</dbReference>
<dbReference type="GO" id="GO:0051287">
    <property type="term" value="F:NAD binding"/>
    <property type="evidence" value="ECO:0007669"/>
    <property type="project" value="UniProtKB-UniRule"/>
</dbReference>
<dbReference type="GO" id="GO:0050661">
    <property type="term" value="F:NADP binding"/>
    <property type="evidence" value="ECO:0007669"/>
    <property type="project" value="UniProtKB-UniRule"/>
</dbReference>
<dbReference type="GO" id="GO:0016726">
    <property type="term" value="F:oxidoreductase activity, acting on CH or CH2 groups, NAD or NADP as acceptor"/>
    <property type="evidence" value="ECO:0007669"/>
    <property type="project" value="UniProtKB-UniRule"/>
</dbReference>
<dbReference type="GO" id="GO:0019877">
    <property type="term" value="P:diaminopimelate biosynthetic process"/>
    <property type="evidence" value="ECO:0007669"/>
    <property type="project" value="UniProtKB-UniRule"/>
</dbReference>
<dbReference type="GO" id="GO:0009089">
    <property type="term" value="P:lysine biosynthetic process via diaminopimelate"/>
    <property type="evidence" value="ECO:0007669"/>
    <property type="project" value="UniProtKB-UniRule"/>
</dbReference>
<dbReference type="CDD" id="cd02274">
    <property type="entry name" value="DHDPR_N"/>
    <property type="match status" value="1"/>
</dbReference>
<dbReference type="FunFam" id="3.30.360.10:FF:000004">
    <property type="entry name" value="4-hydroxy-tetrahydrodipicolinate reductase"/>
    <property type="match status" value="1"/>
</dbReference>
<dbReference type="Gene3D" id="3.30.360.10">
    <property type="entry name" value="Dihydrodipicolinate Reductase, domain 2"/>
    <property type="match status" value="1"/>
</dbReference>
<dbReference type="Gene3D" id="3.40.50.720">
    <property type="entry name" value="NAD(P)-binding Rossmann-like Domain"/>
    <property type="match status" value="1"/>
</dbReference>
<dbReference type="HAMAP" id="MF_00102">
    <property type="entry name" value="DapB"/>
    <property type="match status" value="1"/>
</dbReference>
<dbReference type="InterPro" id="IPR022663">
    <property type="entry name" value="DapB_C"/>
</dbReference>
<dbReference type="InterPro" id="IPR000846">
    <property type="entry name" value="DapB_N"/>
</dbReference>
<dbReference type="InterPro" id="IPR022664">
    <property type="entry name" value="DapB_N_CS"/>
</dbReference>
<dbReference type="InterPro" id="IPR023940">
    <property type="entry name" value="DHDPR_bac"/>
</dbReference>
<dbReference type="InterPro" id="IPR036291">
    <property type="entry name" value="NAD(P)-bd_dom_sf"/>
</dbReference>
<dbReference type="NCBIfam" id="TIGR00036">
    <property type="entry name" value="dapB"/>
    <property type="match status" value="1"/>
</dbReference>
<dbReference type="PANTHER" id="PTHR20836:SF0">
    <property type="entry name" value="4-HYDROXY-TETRAHYDRODIPICOLINATE REDUCTASE 1, CHLOROPLASTIC-RELATED"/>
    <property type="match status" value="1"/>
</dbReference>
<dbReference type="PANTHER" id="PTHR20836">
    <property type="entry name" value="DIHYDRODIPICOLINATE REDUCTASE"/>
    <property type="match status" value="1"/>
</dbReference>
<dbReference type="Pfam" id="PF05173">
    <property type="entry name" value="DapB_C"/>
    <property type="match status" value="1"/>
</dbReference>
<dbReference type="Pfam" id="PF01113">
    <property type="entry name" value="DapB_N"/>
    <property type="match status" value="1"/>
</dbReference>
<dbReference type="PIRSF" id="PIRSF000161">
    <property type="entry name" value="DHPR"/>
    <property type="match status" value="1"/>
</dbReference>
<dbReference type="SUPFAM" id="SSF55347">
    <property type="entry name" value="Glyceraldehyde-3-phosphate dehydrogenase-like, C-terminal domain"/>
    <property type="match status" value="1"/>
</dbReference>
<dbReference type="SUPFAM" id="SSF51735">
    <property type="entry name" value="NAD(P)-binding Rossmann-fold domains"/>
    <property type="match status" value="1"/>
</dbReference>
<dbReference type="PROSITE" id="PS01298">
    <property type="entry name" value="DAPB"/>
    <property type="match status" value="1"/>
</dbReference>
<proteinExistence type="inferred from homology"/>
<keyword id="KW-0028">Amino-acid biosynthesis</keyword>
<keyword id="KW-0963">Cytoplasm</keyword>
<keyword id="KW-0220">Diaminopimelate biosynthesis</keyword>
<keyword id="KW-0457">Lysine biosynthesis</keyword>
<keyword id="KW-0520">NAD</keyword>
<keyword id="KW-0521">NADP</keyword>
<keyword id="KW-0560">Oxidoreductase</keyword>
<keyword id="KW-1185">Reference proteome</keyword>